<comment type="function">
    <text evidence="2">Lipid phosphatase which dephosphorylates phosphatidylglycerophosphate (PGP) to phosphatidylglycerol (PG).</text>
</comment>
<comment type="catalytic activity">
    <reaction evidence="2">
        <text>a 1,2-diacyl-sn-glycero-3-phospho-(1'-sn-glycero-3'-phosphate) + H2O = a 1,2-diacyl-sn-glycero-3-phospho-(1'-sn-glycerol) + phosphate</text>
        <dbReference type="Rhea" id="RHEA:33751"/>
        <dbReference type="ChEBI" id="CHEBI:15377"/>
        <dbReference type="ChEBI" id="CHEBI:43474"/>
        <dbReference type="ChEBI" id="CHEBI:60110"/>
        <dbReference type="ChEBI" id="CHEBI:64716"/>
        <dbReference type="EC" id="3.1.3.27"/>
    </reaction>
</comment>
<comment type="cofactor">
    <cofactor evidence="2">
        <name>Mg(2+)</name>
        <dbReference type="ChEBI" id="CHEBI:18420"/>
    </cofactor>
</comment>
<comment type="pathway">
    <text>Phospholipid metabolism; phosphatidylglycerol biosynthesis; phosphatidylglycerol from CDP-diacylglycerol: step 2/2.</text>
</comment>
<comment type="subcellular location">
    <subcellularLocation>
        <location evidence="2">Cell inner membrane</location>
        <topology evidence="2">Single-pass membrane protein</topology>
    </subcellularLocation>
</comment>
<comment type="disruption phenotype">
    <text evidence="2">No visible phenotype. Simultaneous deletion of pgpC and pgpA increases phosphatidylglycerophosphate (PGP) levels almost hundredfold relative to wild-type. In constrast, simultaneous deletion of pgpC and pgpB leads to a twofold increase of PGP levels. Lethal when combined with deletion of both pgpA and pgpB.</text>
</comment>
<comment type="sequence caution" evidence="3">
    <conflict type="erroneous initiation">
        <sequence resource="EMBL-CDS" id="AAA79822"/>
    </conflict>
    <text>Truncated N-terminus.</text>
</comment>
<comment type="sequence caution" evidence="3">
    <conflict type="erroneous initiation">
        <sequence resource="EMBL-CDS" id="BAA10910"/>
    </conflict>
    <text>Truncated N-terminus.</text>
</comment>
<comment type="sequence caution" evidence="3">
    <conflict type="erroneous initiation">
        <sequence resource="EMBL-CDS" id="CAA51063"/>
    </conflict>
    <text>Truncated N-terminus.</text>
</comment>
<dbReference type="EC" id="3.1.3.27"/>
<dbReference type="EMBL" id="X72336">
    <property type="protein sequence ID" value="CAA51063.1"/>
    <property type="status" value="ALT_INIT"/>
    <property type="molecule type" value="Genomic_DNA"/>
</dbReference>
<dbReference type="EMBL" id="D64044">
    <property type="protein sequence ID" value="BAA10910.1"/>
    <property type="status" value="ALT_INIT"/>
    <property type="molecule type" value="Genomic_DNA"/>
</dbReference>
<dbReference type="EMBL" id="U36841">
    <property type="protein sequence ID" value="AAA79822.1"/>
    <property type="status" value="ALT_INIT"/>
    <property type="molecule type" value="Genomic_DNA"/>
</dbReference>
<dbReference type="EMBL" id="U00096">
    <property type="protein sequence ID" value="AAC75613.2"/>
    <property type="molecule type" value="Genomic_DNA"/>
</dbReference>
<dbReference type="EMBL" id="AP009048">
    <property type="protein sequence ID" value="BAE76736.1"/>
    <property type="molecule type" value="Genomic_DNA"/>
</dbReference>
<dbReference type="PIR" id="S20973">
    <property type="entry name" value="S20973"/>
</dbReference>
<dbReference type="RefSeq" id="NP_417055.4">
    <property type="nucleotide sequence ID" value="NC_000913.3"/>
</dbReference>
<dbReference type="RefSeq" id="WP_000190655.1">
    <property type="nucleotide sequence ID" value="NZ_STEB01000011.1"/>
</dbReference>
<dbReference type="SMR" id="P0AD42"/>
<dbReference type="BioGRID" id="4261368">
    <property type="interactions" value="7"/>
</dbReference>
<dbReference type="FunCoup" id="P0AD42">
    <property type="interactions" value="41"/>
</dbReference>
<dbReference type="STRING" id="511145.b2560"/>
<dbReference type="jPOST" id="P0AD42"/>
<dbReference type="PaxDb" id="511145-b2560"/>
<dbReference type="DNASU" id="947026"/>
<dbReference type="EnsemblBacteria" id="AAC75613">
    <property type="protein sequence ID" value="AAC75613"/>
    <property type="gene ID" value="b2560"/>
</dbReference>
<dbReference type="GeneID" id="93774575"/>
<dbReference type="GeneID" id="947026"/>
<dbReference type="KEGG" id="ecj:JW5408"/>
<dbReference type="KEGG" id="eco:b2560"/>
<dbReference type="KEGG" id="ecoc:C3026_14170"/>
<dbReference type="PATRIC" id="fig|511145.12.peg.2662"/>
<dbReference type="EchoBASE" id="EB1345"/>
<dbReference type="eggNOG" id="COG0560">
    <property type="taxonomic scope" value="Bacteria"/>
</dbReference>
<dbReference type="HOGENOM" id="CLU_112917_0_0_6"/>
<dbReference type="InParanoid" id="P0AD42"/>
<dbReference type="OMA" id="GTFMRYL"/>
<dbReference type="OrthoDB" id="6545830at2"/>
<dbReference type="PhylomeDB" id="P0AD42"/>
<dbReference type="BioCyc" id="EcoCyc:EG11371-MONOMER"/>
<dbReference type="BioCyc" id="MetaCyc:EG11371-MONOMER"/>
<dbReference type="UniPathway" id="UPA00084">
    <property type="reaction ID" value="UER00504"/>
</dbReference>
<dbReference type="PRO" id="PR:P0AD42"/>
<dbReference type="Proteomes" id="UP000000625">
    <property type="component" value="Chromosome"/>
</dbReference>
<dbReference type="GO" id="GO:0005886">
    <property type="term" value="C:plasma membrane"/>
    <property type="evidence" value="ECO:0000314"/>
    <property type="project" value="EcoCyc"/>
</dbReference>
<dbReference type="GO" id="GO:0046872">
    <property type="term" value="F:metal ion binding"/>
    <property type="evidence" value="ECO:0007669"/>
    <property type="project" value="UniProtKB-KW"/>
</dbReference>
<dbReference type="GO" id="GO:0008962">
    <property type="term" value="F:phosphatidylglycerophosphatase activity"/>
    <property type="evidence" value="ECO:0000315"/>
    <property type="project" value="EcoCyc"/>
</dbReference>
<dbReference type="GO" id="GO:0046474">
    <property type="term" value="P:glycerophospholipid biosynthetic process"/>
    <property type="evidence" value="ECO:0000315"/>
    <property type="project" value="EcoCyc"/>
</dbReference>
<dbReference type="GO" id="GO:0006655">
    <property type="term" value="P:phosphatidylglycerol biosynthetic process"/>
    <property type="evidence" value="ECO:0007669"/>
    <property type="project" value="UniProtKB-UniPathway"/>
</dbReference>
<dbReference type="GO" id="GO:0009395">
    <property type="term" value="P:phospholipid catabolic process"/>
    <property type="evidence" value="ECO:0007669"/>
    <property type="project" value="UniProtKB-KW"/>
</dbReference>
<dbReference type="CDD" id="cd02612">
    <property type="entry name" value="HAD_PGPPase"/>
    <property type="match status" value="1"/>
</dbReference>
<dbReference type="FunFam" id="1.20.1440.100:FF:000002">
    <property type="entry name" value="HAD hydrolase, family IF"/>
    <property type="match status" value="1"/>
</dbReference>
<dbReference type="Gene3D" id="3.40.50.1000">
    <property type="entry name" value="HAD superfamily/HAD-like"/>
    <property type="match status" value="1"/>
</dbReference>
<dbReference type="Gene3D" id="1.20.1440.100">
    <property type="entry name" value="SG protein - dephosphorylation function"/>
    <property type="match status" value="1"/>
</dbReference>
<dbReference type="InterPro" id="IPR036412">
    <property type="entry name" value="HAD-like_sf"/>
</dbReference>
<dbReference type="InterPro" id="IPR006435">
    <property type="entry name" value="HAD-SF_hydro_IF_YfhB"/>
</dbReference>
<dbReference type="InterPro" id="IPR023214">
    <property type="entry name" value="HAD_sf"/>
</dbReference>
<dbReference type="NCBIfam" id="TIGR01545">
    <property type="entry name" value="YfhB_g-proteo"/>
    <property type="match status" value="1"/>
</dbReference>
<dbReference type="Pfam" id="PF12710">
    <property type="entry name" value="HAD"/>
    <property type="match status" value="1"/>
</dbReference>
<dbReference type="SUPFAM" id="SSF56784">
    <property type="entry name" value="HAD-like"/>
    <property type="match status" value="1"/>
</dbReference>
<reference key="1">
    <citation type="journal article" date="1992" name="Mol. Microbiol.">
        <title>Analysis of an Escherichia coli mutant strain resistant to the cell-killing function encoded by the gef gene family.</title>
        <authorList>
            <person name="Poulsen L.K."/>
            <person name="Larsen N.W."/>
            <person name="Molin S."/>
            <person name="Andersson P."/>
        </authorList>
    </citation>
    <scope>NUCLEOTIDE SEQUENCE [GENOMIC DNA]</scope>
    <source>
        <strain>NWL37</strain>
    </source>
</reference>
<reference key="2">
    <citation type="submission" date="1995-09" db="EMBL/GenBank/DDBJ databases">
        <authorList>
            <person name="Nashimoto H."/>
            <person name="Saito N."/>
        </authorList>
    </citation>
    <scope>NUCLEOTIDE SEQUENCE [GENOMIC DNA]</scope>
    <source>
        <strain>K12</strain>
    </source>
</reference>
<reference key="3">
    <citation type="journal article" date="1997" name="Science">
        <title>The complete genome sequence of Escherichia coli K-12.</title>
        <authorList>
            <person name="Blattner F.R."/>
            <person name="Plunkett G. III"/>
            <person name="Bloch C.A."/>
            <person name="Perna N.T."/>
            <person name="Burland V."/>
            <person name="Riley M."/>
            <person name="Collado-Vides J."/>
            <person name="Glasner J.D."/>
            <person name="Rode C.K."/>
            <person name="Mayhew G.F."/>
            <person name="Gregor J."/>
            <person name="Davis N.W."/>
            <person name="Kirkpatrick H.A."/>
            <person name="Goeden M.A."/>
            <person name="Rose D.J."/>
            <person name="Mau B."/>
            <person name="Shao Y."/>
        </authorList>
    </citation>
    <scope>NUCLEOTIDE SEQUENCE [LARGE SCALE GENOMIC DNA]</scope>
    <source>
        <strain>K12 / MG1655 / ATCC 47076</strain>
    </source>
</reference>
<reference key="4">
    <citation type="journal article" date="2006" name="Mol. Syst. Biol.">
        <title>Highly accurate genome sequences of Escherichia coli K-12 strains MG1655 and W3110.</title>
        <authorList>
            <person name="Hayashi K."/>
            <person name="Morooka N."/>
            <person name="Yamamoto Y."/>
            <person name="Fujita K."/>
            <person name="Isono K."/>
            <person name="Choi S."/>
            <person name="Ohtsubo E."/>
            <person name="Baba T."/>
            <person name="Wanner B.L."/>
            <person name="Mori H."/>
            <person name="Horiuchi T."/>
        </authorList>
    </citation>
    <scope>NUCLEOTIDE SEQUENCE [LARGE SCALE GENOMIC DNA]</scope>
    <source>
        <strain>K12 / W3110 / ATCC 27325 / DSM 5911</strain>
    </source>
</reference>
<reference key="5">
    <citation type="journal article" date="2011" name="J. Biol. Chem.">
        <title>Three phosphatidylglycerol-phosphate phosphatases in the inner membrane of Escherichia coli.</title>
        <authorList>
            <person name="Lu Y.H."/>
            <person name="Guan Z."/>
            <person name="Zhao J."/>
            <person name="Raetz C.R."/>
        </authorList>
    </citation>
    <scope>GENE NAME</scope>
    <scope>FUNCTION</scope>
    <scope>CATALYTIC ACTIVITY</scope>
    <scope>COFACTOR</scope>
    <scope>SUBCELLULAR LOCATION</scope>
    <scope>DISRUPTION PHENOTYPE</scope>
    <source>
        <strain>K12 / W3110 / ATCC 27325 / DSM 5911</strain>
    </source>
</reference>
<evidence type="ECO:0000255" key="1"/>
<evidence type="ECO:0000269" key="2">
    <source>
    </source>
</evidence>
<evidence type="ECO:0000305" key="3"/>
<name>PGPC_ECOLI</name>
<sequence>MATHERRVVFFDLDGTLHQQDMFGSFLRYLLRRQPLNALLVLPLLPIIAIALLIKGRAARWPMSLLLWGCTFGHSEARLQTLQADFVRWFRDNVTAFPLVQERLTTYLLSSDADIWLITGSPQPLVEAVYFDTPWLPRVNLIASQIQRGYGGWVLTMRCLGHEKVAQLERKIGTPLRLYSGYSDSNQDNPLLYFCQHRWRVTPRGELQQLE</sequence>
<protein>
    <recommendedName>
        <fullName>Phosphatidylglycerophosphatase C</fullName>
        <ecNumber>3.1.3.27</ecNumber>
    </recommendedName>
    <alternativeName>
        <fullName>Phosphatidylglycerolphosphate phosphatase C</fullName>
        <shortName>PGP phosphatase C</shortName>
    </alternativeName>
</protein>
<organism>
    <name type="scientific">Escherichia coli (strain K12)</name>
    <dbReference type="NCBI Taxonomy" id="83333"/>
    <lineage>
        <taxon>Bacteria</taxon>
        <taxon>Pseudomonadati</taxon>
        <taxon>Pseudomonadota</taxon>
        <taxon>Gammaproteobacteria</taxon>
        <taxon>Enterobacterales</taxon>
        <taxon>Enterobacteriaceae</taxon>
        <taxon>Escherichia</taxon>
    </lineage>
</organism>
<feature type="chain" id="PRO_0000169247" description="Phosphatidylglycerophosphatase C">
    <location>
        <begin position="1"/>
        <end position="211"/>
    </location>
</feature>
<feature type="topological domain" description="Cytoplasmic" evidence="1">
    <location>
        <begin position="1"/>
        <end position="33"/>
    </location>
</feature>
<feature type="transmembrane region" description="Helical" evidence="1">
    <location>
        <begin position="34"/>
        <end position="54"/>
    </location>
</feature>
<feature type="topological domain" description="Periplasmic" evidence="1">
    <location>
        <begin position="55"/>
        <end position="211"/>
    </location>
</feature>
<accession>P0AD42</accession>
<accession>P30133</accession>
<accession>Q2MAH0</accession>
<keyword id="KW-0997">Cell inner membrane</keyword>
<keyword id="KW-1003">Cell membrane</keyword>
<keyword id="KW-0378">Hydrolase</keyword>
<keyword id="KW-0442">Lipid degradation</keyword>
<keyword id="KW-0443">Lipid metabolism</keyword>
<keyword id="KW-0460">Magnesium</keyword>
<keyword id="KW-0472">Membrane</keyword>
<keyword id="KW-0479">Metal-binding</keyword>
<keyword id="KW-0595">Phospholipid degradation</keyword>
<keyword id="KW-1208">Phospholipid metabolism</keyword>
<keyword id="KW-1185">Reference proteome</keyword>
<keyword id="KW-0812">Transmembrane</keyword>
<keyword id="KW-1133">Transmembrane helix</keyword>
<proteinExistence type="evidence at protein level"/>
<gene>
    <name type="primary">pgpC</name>
    <name type="synonym">yfhB</name>
    <name type="ordered locus">b2560</name>
    <name type="ordered locus">JW5408</name>
</gene>